<organism>
    <name type="scientific">Gorilla gorilla gorilla</name>
    <name type="common">Western lowland gorilla</name>
    <dbReference type="NCBI Taxonomy" id="9595"/>
    <lineage>
        <taxon>Eukaryota</taxon>
        <taxon>Metazoa</taxon>
        <taxon>Chordata</taxon>
        <taxon>Craniata</taxon>
        <taxon>Vertebrata</taxon>
        <taxon>Euteleostomi</taxon>
        <taxon>Mammalia</taxon>
        <taxon>Eutheria</taxon>
        <taxon>Euarchontoglires</taxon>
        <taxon>Primates</taxon>
        <taxon>Haplorrhini</taxon>
        <taxon>Catarrhini</taxon>
        <taxon>Hominidae</taxon>
        <taxon>Gorilla</taxon>
    </lineage>
</organism>
<keyword id="KW-1015">Disulfide bond</keyword>
<keyword id="KW-0255">Endonuclease</keyword>
<keyword id="KW-0325">Glycoprotein</keyword>
<keyword id="KW-0378">Hydrolase</keyword>
<keyword id="KW-0456">Lyase</keyword>
<keyword id="KW-0458">Lysosome</keyword>
<keyword id="KW-0944">Nitration</keyword>
<keyword id="KW-0540">Nuclease</keyword>
<keyword id="KW-1185">Reference proteome</keyword>
<keyword id="KW-0732">Signal</keyword>
<reference key="1">
    <citation type="journal article" date="1995" name="Nat. Genet.">
        <title>Rapid evolution of a unique family of primate ribonuclease genes.</title>
        <authorList>
            <person name="Rosenberg H.F."/>
            <person name="Dyer K.D."/>
            <person name="Tiffany H.L."/>
            <person name="Gonzalez M."/>
        </authorList>
    </citation>
    <scope>NUCLEOTIDE SEQUENCE [GENOMIC DNA]</scope>
</reference>
<proteinExistence type="inferred from homology"/>
<gene>
    <name type="primary">RNASE2</name>
    <name type="synonym">EDN</name>
    <name type="synonym">RNS2</name>
</gene>
<name>RNAS2_GORGO</name>
<sequence length="161" mass="18382">MVPKLFTSQICLLLLLGLLAVEGSLHVKPPQFTWAQWFETQHINMTSQQCTNAMRVINNYQRRCKNQNTFLLTTFANVVNVCGNPNMTCPSNKTRKNCHHSGSQVPLIHCNLTTPSPQNISNCRYAQTPANMFYIVACDNRDQRRDPPQYPVVPVHLDRII</sequence>
<protein>
    <recommendedName>
        <fullName>Non-secretory ribonuclease</fullName>
        <ecNumber evidence="3">4.6.1.18</ecNumber>
    </recommendedName>
    <alternativeName>
        <fullName>Eosinophil-derived neurotoxin</fullName>
    </alternativeName>
    <alternativeName>
        <fullName>RNase UpI-2</fullName>
    </alternativeName>
    <alternativeName>
        <fullName>Ribonuclease 2</fullName>
        <shortName>RNase 2</shortName>
    </alternativeName>
    <alternativeName>
        <fullName>Ribonuclease US</fullName>
    </alternativeName>
</protein>
<comment type="function">
    <text>This is a non-secretory ribonuclease. It is a pyrimidine specific nuclease with a slight preference for U. Cytotoxin and helminthotoxin. Possesses a wide variety of biological activities.</text>
</comment>
<comment type="catalytic activity">
    <reaction evidence="3">
        <text>an [RNA] containing cytidine + H2O = an [RNA]-3'-cytidine-3'-phosphate + a 5'-hydroxy-ribonucleotide-3'-[RNA].</text>
        <dbReference type="EC" id="4.6.1.18"/>
    </reaction>
</comment>
<comment type="catalytic activity">
    <reaction evidence="3">
        <text>an [RNA] containing uridine + H2O = an [RNA]-3'-uridine-3'-phosphate + a 5'-hydroxy-ribonucleotide-3'-[RNA].</text>
        <dbReference type="EC" id="4.6.1.18"/>
    </reaction>
</comment>
<comment type="subunit">
    <text evidence="1">Interacts with and forms a tight 1:1 complex with RNH1. Dimerization of two such complexes may occur (By similarity).</text>
</comment>
<comment type="subcellular location">
    <subcellularLocation>
        <location evidence="5">Lysosome</location>
    </subcellularLocation>
    <subcellularLocation>
        <location>Cytoplasmic granule</location>
    </subcellularLocation>
    <text>Matrix of eosinophil's large specific granule.</text>
</comment>
<comment type="similarity">
    <text evidence="5">Belongs to the pancreatic ribonuclease family.</text>
</comment>
<feature type="signal peptide" evidence="1">
    <location>
        <begin position="1"/>
        <end position="27"/>
    </location>
</feature>
<feature type="chain" id="PRO_0000030873" description="Non-secretory ribonuclease">
    <location>
        <begin position="28"/>
        <end position="161"/>
    </location>
</feature>
<feature type="active site" description="Proton acceptor" evidence="1">
    <location>
        <position position="42"/>
    </location>
</feature>
<feature type="active site" description="Proton donor" evidence="1">
    <location>
        <position position="156"/>
    </location>
</feature>
<feature type="binding site" evidence="1">
    <location>
        <begin position="65"/>
        <end position="69"/>
    </location>
    <ligand>
        <name>substrate</name>
    </ligand>
</feature>
<feature type="modified residue" description="3'-nitrotyrosine" evidence="2">
    <location>
        <position position="60"/>
    </location>
</feature>
<feature type="glycosylation site" description="C-linked (Man) tryptophan" evidence="2">
    <location>
        <position position="34"/>
    </location>
</feature>
<feature type="glycosylation site" description="N-linked (GlcNAc...) asparagine" evidence="4">
    <location>
        <position position="44"/>
    </location>
</feature>
<feature type="glycosylation site" description="N-linked (GlcNAc...) asparagine" evidence="4">
    <location>
        <position position="86"/>
    </location>
</feature>
<feature type="glycosylation site" description="N-linked (GlcNAc...) asparagine" evidence="4">
    <location>
        <position position="92"/>
    </location>
</feature>
<feature type="glycosylation site" description="N-linked (GlcNAc...) asparagine" evidence="4">
    <location>
        <position position="111"/>
    </location>
</feature>
<feature type="glycosylation site" description="N-linked (GlcNAc...) asparagine" evidence="4">
    <location>
        <position position="119"/>
    </location>
</feature>
<feature type="disulfide bond" evidence="1">
    <location>
        <begin position="50"/>
        <end position="110"/>
    </location>
</feature>
<feature type="disulfide bond" evidence="1">
    <location>
        <begin position="64"/>
        <end position="123"/>
    </location>
</feature>
<feature type="disulfide bond" evidence="1">
    <location>
        <begin position="82"/>
        <end position="138"/>
    </location>
</feature>
<feature type="disulfide bond" evidence="1">
    <location>
        <begin position="89"/>
        <end position="98"/>
    </location>
</feature>
<dbReference type="EC" id="4.6.1.18" evidence="3"/>
<dbReference type="EMBL" id="U24100">
    <property type="protein sequence ID" value="AAC50144.1"/>
    <property type="molecule type" value="Genomic_DNA"/>
</dbReference>
<dbReference type="PIR" id="I37034">
    <property type="entry name" value="I37034"/>
</dbReference>
<dbReference type="RefSeq" id="XP_004054908.3">
    <property type="nucleotide sequence ID" value="XM_004054860.4"/>
</dbReference>
<dbReference type="SMR" id="P47782"/>
<dbReference type="FunCoup" id="P47782">
    <property type="interactions" value="21"/>
</dbReference>
<dbReference type="STRING" id="9593.ENSGGOP00000004990"/>
<dbReference type="GlyCosmos" id="P47782">
    <property type="glycosylation" value="6 sites, No reported glycans"/>
</dbReference>
<dbReference type="Ensembl" id="ENSGGOT00000005117.3">
    <property type="protein sequence ID" value="ENSGGOP00000004990.2"/>
    <property type="gene ID" value="ENSGGOG00000043975.1"/>
</dbReference>
<dbReference type="GeneID" id="101147913"/>
<dbReference type="KEGG" id="ggo:101147913"/>
<dbReference type="CTD" id="6036"/>
<dbReference type="eggNOG" id="ENOG502TF52">
    <property type="taxonomic scope" value="Eukaryota"/>
</dbReference>
<dbReference type="GeneTree" id="ENSGT00940000162253"/>
<dbReference type="HOGENOM" id="CLU_117006_0_1_1"/>
<dbReference type="InParanoid" id="P47782"/>
<dbReference type="OMA" id="TRKNCHH"/>
<dbReference type="Proteomes" id="UP000001519">
    <property type="component" value="Chromosome 14"/>
</dbReference>
<dbReference type="Bgee" id="ENSGGOG00000043975">
    <property type="expression patterns" value="Expressed in frontal cortex and 2 other cell types or tissues"/>
</dbReference>
<dbReference type="GO" id="GO:0005615">
    <property type="term" value="C:extracellular space"/>
    <property type="evidence" value="ECO:0000318"/>
    <property type="project" value="GO_Central"/>
</dbReference>
<dbReference type="GO" id="GO:0005764">
    <property type="term" value="C:lysosome"/>
    <property type="evidence" value="ECO:0007669"/>
    <property type="project" value="UniProtKB-SubCell"/>
</dbReference>
<dbReference type="GO" id="GO:0016829">
    <property type="term" value="F:lyase activity"/>
    <property type="evidence" value="ECO:0007669"/>
    <property type="project" value="UniProtKB-KW"/>
</dbReference>
<dbReference type="GO" id="GO:0003676">
    <property type="term" value="F:nucleic acid binding"/>
    <property type="evidence" value="ECO:0007669"/>
    <property type="project" value="InterPro"/>
</dbReference>
<dbReference type="GO" id="GO:0004522">
    <property type="term" value="F:ribonuclease A activity"/>
    <property type="evidence" value="ECO:0007669"/>
    <property type="project" value="UniProtKB-EC"/>
</dbReference>
<dbReference type="GO" id="GO:0004540">
    <property type="term" value="F:RNA nuclease activity"/>
    <property type="evidence" value="ECO:0000318"/>
    <property type="project" value="GO_Central"/>
</dbReference>
<dbReference type="GO" id="GO:0006935">
    <property type="term" value="P:chemotaxis"/>
    <property type="evidence" value="ECO:0000318"/>
    <property type="project" value="GO_Central"/>
</dbReference>
<dbReference type="GO" id="GO:0051607">
    <property type="term" value="P:defense response to virus"/>
    <property type="evidence" value="ECO:0007669"/>
    <property type="project" value="Ensembl"/>
</dbReference>
<dbReference type="GO" id="GO:0002227">
    <property type="term" value="P:innate immune response in mucosa"/>
    <property type="evidence" value="ECO:0000318"/>
    <property type="project" value="GO_Central"/>
</dbReference>
<dbReference type="CDD" id="cd06265">
    <property type="entry name" value="RNase_A_canonical"/>
    <property type="match status" value="1"/>
</dbReference>
<dbReference type="FunFam" id="3.10.130.10:FF:000001">
    <property type="entry name" value="Ribonuclease pancreatic"/>
    <property type="match status" value="1"/>
</dbReference>
<dbReference type="Gene3D" id="3.10.130.10">
    <property type="entry name" value="Ribonuclease A-like domain"/>
    <property type="match status" value="1"/>
</dbReference>
<dbReference type="InterPro" id="IPR001427">
    <property type="entry name" value="RNaseA"/>
</dbReference>
<dbReference type="InterPro" id="IPR036816">
    <property type="entry name" value="RNaseA-like_dom_sf"/>
</dbReference>
<dbReference type="InterPro" id="IPR023411">
    <property type="entry name" value="RNaseA_AS"/>
</dbReference>
<dbReference type="InterPro" id="IPR023412">
    <property type="entry name" value="RNaseA_domain"/>
</dbReference>
<dbReference type="PANTHER" id="PTHR11437:SF62">
    <property type="entry name" value="NON-SECRETORY RIBONUCLEASE"/>
    <property type="match status" value="1"/>
</dbReference>
<dbReference type="PANTHER" id="PTHR11437">
    <property type="entry name" value="RIBONUCLEASE"/>
    <property type="match status" value="1"/>
</dbReference>
<dbReference type="Pfam" id="PF00074">
    <property type="entry name" value="RnaseA"/>
    <property type="match status" value="1"/>
</dbReference>
<dbReference type="PRINTS" id="PR00794">
    <property type="entry name" value="RIBONUCLEASE"/>
</dbReference>
<dbReference type="SMART" id="SM00092">
    <property type="entry name" value="RNAse_Pc"/>
    <property type="match status" value="1"/>
</dbReference>
<dbReference type="SUPFAM" id="SSF54076">
    <property type="entry name" value="RNase A-like"/>
    <property type="match status" value="1"/>
</dbReference>
<dbReference type="PROSITE" id="PS00127">
    <property type="entry name" value="RNASE_PANCREATIC"/>
    <property type="match status" value="1"/>
</dbReference>
<evidence type="ECO:0000250" key="1"/>
<evidence type="ECO:0000250" key="2">
    <source>
        <dbReference type="UniProtKB" id="P10153"/>
    </source>
</evidence>
<evidence type="ECO:0000250" key="3">
    <source>
        <dbReference type="UniProtKB" id="P47784"/>
    </source>
</evidence>
<evidence type="ECO:0000255" key="4"/>
<evidence type="ECO:0000305" key="5"/>
<accession>P47782</accession>